<evidence type="ECO:0000255" key="1">
    <source>
        <dbReference type="HAMAP-Rule" id="MF_01363"/>
    </source>
</evidence>
<evidence type="ECO:0000305" key="2"/>
<organism>
    <name type="scientific">Streptococcus pyogenes serotype M6 (strain ATCC BAA-946 / MGAS10394)</name>
    <dbReference type="NCBI Taxonomy" id="286636"/>
    <lineage>
        <taxon>Bacteria</taxon>
        <taxon>Bacillati</taxon>
        <taxon>Bacillota</taxon>
        <taxon>Bacilli</taxon>
        <taxon>Lactobacillales</taxon>
        <taxon>Streptococcaceae</taxon>
        <taxon>Streptococcus</taxon>
    </lineage>
</organism>
<comment type="function">
    <text evidence="1">This protein binds to 23S rRNA in the presence of protein L20.</text>
</comment>
<comment type="subunit">
    <text evidence="1">Part of the 50S ribosomal subunit. Contacts protein L20.</text>
</comment>
<comment type="similarity">
    <text evidence="1">Belongs to the bacterial ribosomal protein bL21 family.</text>
</comment>
<keyword id="KW-0687">Ribonucleoprotein</keyword>
<keyword id="KW-0689">Ribosomal protein</keyword>
<keyword id="KW-0694">RNA-binding</keyword>
<keyword id="KW-0699">rRNA-binding</keyword>
<proteinExistence type="inferred from homology"/>
<reference key="1">
    <citation type="journal article" date="2004" name="J. Infect. Dis.">
        <title>Progress toward characterization of the group A Streptococcus metagenome: complete genome sequence of a macrolide-resistant serotype M6 strain.</title>
        <authorList>
            <person name="Banks D.J."/>
            <person name="Porcella S.F."/>
            <person name="Barbian K.D."/>
            <person name="Beres S.B."/>
            <person name="Philips L.E."/>
            <person name="Voyich J.M."/>
            <person name="DeLeo F.R."/>
            <person name="Martin J.M."/>
            <person name="Somerville G.A."/>
            <person name="Musser J.M."/>
        </authorList>
    </citation>
    <scope>NUCLEOTIDE SEQUENCE [LARGE SCALE GENOMIC DNA]</scope>
    <source>
        <strain>ATCC BAA-946 / MGAS10394</strain>
    </source>
</reference>
<sequence>MSTYAIIKTGGKQVKVEVGQAIYVEKIDAEAGAEVTFNEVVLVGGDKTVVGTPVVEGATVVGTVEKQGKQKKVVTFKYKPKKGSHRKQGHRQPYTKVVINAINA</sequence>
<dbReference type="EMBL" id="CP000003">
    <property type="protein sequence ID" value="AAT86786.1"/>
    <property type="molecule type" value="Genomic_DNA"/>
</dbReference>
<dbReference type="RefSeq" id="WP_002985116.1">
    <property type="nucleotide sequence ID" value="NC_006086.1"/>
</dbReference>
<dbReference type="SMR" id="Q5XCS7"/>
<dbReference type="GeneID" id="83690429"/>
<dbReference type="KEGG" id="spa:M6_Spy0651"/>
<dbReference type="HOGENOM" id="CLU_061463_3_1_9"/>
<dbReference type="Proteomes" id="UP000001167">
    <property type="component" value="Chromosome"/>
</dbReference>
<dbReference type="GO" id="GO:0005737">
    <property type="term" value="C:cytoplasm"/>
    <property type="evidence" value="ECO:0007669"/>
    <property type="project" value="UniProtKB-ARBA"/>
</dbReference>
<dbReference type="GO" id="GO:1990904">
    <property type="term" value="C:ribonucleoprotein complex"/>
    <property type="evidence" value="ECO:0007669"/>
    <property type="project" value="UniProtKB-KW"/>
</dbReference>
<dbReference type="GO" id="GO:0005840">
    <property type="term" value="C:ribosome"/>
    <property type="evidence" value="ECO:0007669"/>
    <property type="project" value="UniProtKB-KW"/>
</dbReference>
<dbReference type="GO" id="GO:0019843">
    <property type="term" value="F:rRNA binding"/>
    <property type="evidence" value="ECO:0007669"/>
    <property type="project" value="UniProtKB-UniRule"/>
</dbReference>
<dbReference type="GO" id="GO:0003735">
    <property type="term" value="F:structural constituent of ribosome"/>
    <property type="evidence" value="ECO:0007669"/>
    <property type="project" value="InterPro"/>
</dbReference>
<dbReference type="GO" id="GO:0006412">
    <property type="term" value="P:translation"/>
    <property type="evidence" value="ECO:0007669"/>
    <property type="project" value="UniProtKB-UniRule"/>
</dbReference>
<dbReference type="HAMAP" id="MF_01363">
    <property type="entry name" value="Ribosomal_bL21"/>
    <property type="match status" value="1"/>
</dbReference>
<dbReference type="InterPro" id="IPR028909">
    <property type="entry name" value="bL21-like"/>
</dbReference>
<dbReference type="InterPro" id="IPR036164">
    <property type="entry name" value="bL21-like_sf"/>
</dbReference>
<dbReference type="InterPro" id="IPR001787">
    <property type="entry name" value="Ribosomal_bL21"/>
</dbReference>
<dbReference type="InterPro" id="IPR018258">
    <property type="entry name" value="Ribosomal_bL21_CS"/>
</dbReference>
<dbReference type="NCBIfam" id="TIGR00061">
    <property type="entry name" value="L21"/>
    <property type="match status" value="1"/>
</dbReference>
<dbReference type="PANTHER" id="PTHR21349">
    <property type="entry name" value="50S RIBOSOMAL PROTEIN L21"/>
    <property type="match status" value="1"/>
</dbReference>
<dbReference type="PANTHER" id="PTHR21349:SF0">
    <property type="entry name" value="LARGE RIBOSOMAL SUBUNIT PROTEIN BL21M"/>
    <property type="match status" value="1"/>
</dbReference>
<dbReference type="Pfam" id="PF00829">
    <property type="entry name" value="Ribosomal_L21p"/>
    <property type="match status" value="1"/>
</dbReference>
<dbReference type="SUPFAM" id="SSF141091">
    <property type="entry name" value="L21p-like"/>
    <property type="match status" value="1"/>
</dbReference>
<dbReference type="PROSITE" id="PS01169">
    <property type="entry name" value="RIBOSOMAL_L21"/>
    <property type="match status" value="1"/>
</dbReference>
<name>RL21_STRP6</name>
<gene>
    <name evidence="1" type="primary">rplU</name>
    <name type="ordered locus">M6_Spy0651</name>
</gene>
<accession>Q5XCS7</accession>
<protein>
    <recommendedName>
        <fullName evidence="1">Large ribosomal subunit protein bL21</fullName>
    </recommendedName>
    <alternativeName>
        <fullName evidence="2">50S ribosomal protein L21</fullName>
    </alternativeName>
</protein>
<feature type="chain" id="PRO_0000269401" description="Large ribosomal subunit protein bL21">
    <location>
        <begin position="1"/>
        <end position="104"/>
    </location>
</feature>